<proteinExistence type="inferred from homology"/>
<protein>
    <recommendedName>
        <fullName evidence="1">Small ribosomal subunit protein uS14</fullName>
    </recommendedName>
    <alternativeName>
        <fullName evidence="2">30S ribosomal protein S14 type Z</fullName>
    </alternativeName>
</protein>
<sequence length="61" mass="7077">MAKTSKIVQSQRASKFKVQHHNRCSRCGRPRGYINRFGLCRICFRELALQGQIPGVRKSSW</sequence>
<feature type="chain" id="PRO_0000269094" description="Small ribosomal subunit protein uS14">
    <location>
        <begin position="1"/>
        <end position="61"/>
    </location>
</feature>
<feature type="binding site" evidence="1">
    <location>
        <position position="24"/>
    </location>
    <ligand>
        <name>Zn(2+)</name>
        <dbReference type="ChEBI" id="CHEBI:29105"/>
    </ligand>
</feature>
<feature type="binding site" evidence="1">
    <location>
        <position position="27"/>
    </location>
    <ligand>
        <name>Zn(2+)</name>
        <dbReference type="ChEBI" id="CHEBI:29105"/>
    </ligand>
</feature>
<feature type="binding site" evidence="1">
    <location>
        <position position="40"/>
    </location>
    <ligand>
        <name>Zn(2+)</name>
        <dbReference type="ChEBI" id="CHEBI:29105"/>
    </ligand>
</feature>
<feature type="binding site" evidence="1">
    <location>
        <position position="43"/>
    </location>
    <ligand>
        <name>Zn(2+)</name>
        <dbReference type="ChEBI" id="CHEBI:29105"/>
    </ligand>
</feature>
<dbReference type="EMBL" id="AJ965256">
    <property type="protein sequence ID" value="CAI82652.1"/>
    <property type="molecule type" value="Genomic_DNA"/>
</dbReference>
<dbReference type="RefSeq" id="WP_010936264.1">
    <property type="nucleotide sequence ID" value="NC_007356.1"/>
</dbReference>
<dbReference type="SMR" id="Q3ZZL1"/>
<dbReference type="KEGG" id="deh:cbdbB14"/>
<dbReference type="HOGENOM" id="CLU_139869_3_0_0"/>
<dbReference type="Proteomes" id="UP000000433">
    <property type="component" value="Chromosome"/>
</dbReference>
<dbReference type="GO" id="GO:0005737">
    <property type="term" value="C:cytoplasm"/>
    <property type="evidence" value="ECO:0007669"/>
    <property type="project" value="UniProtKB-ARBA"/>
</dbReference>
<dbReference type="GO" id="GO:0015935">
    <property type="term" value="C:small ribosomal subunit"/>
    <property type="evidence" value="ECO:0007669"/>
    <property type="project" value="TreeGrafter"/>
</dbReference>
<dbReference type="GO" id="GO:0019843">
    <property type="term" value="F:rRNA binding"/>
    <property type="evidence" value="ECO:0007669"/>
    <property type="project" value="UniProtKB-UniRule"/>
</dbReference>
<dbReference type="GO" id="GO:0003735">
    <property type="term" value="F:structural constituent of ribosome"/>
    <property type="evidence" value="ECO:0007669"/>
    <property type="project" value="InterPro"/>
</dbReference>
<dbReference type="GO" id="GO:0008270">
    <property type="term" value="F:zinc ion binding"/>
    <property type="evidence" value="ECO:0007669"/>
    <property type="project" value="UniProtKB-UniRule"/>
</dbReference>
<dbReference type="GO" id="GO:0006412">
    <property type="term" value="P:translation"/>
    <property type="evidence" value="ECO:0007669"/>
    <property type="project" value="UniProtKB-UniRule"/>
</dbReference>
<dbReference type="FunFam" id="4.10.830.10:FF:000001">
    <property type="entry name" value="30S ribosomal protein S14 type Z"/>
    <property type="match status" value="1"/>
</dbReference>
<dbReference type="Gene3D" id="4.10.830.10">
    <property type="entry name" value="30s Ribosomal Protein S14, Chain N"/>
    <property type="match status" value="1"/>
</dbReference>
<dbReference type="HAMAP" id="MF_01364_B">
    <property type="entry name" value="Ribosomal_uS14_2_B"/>
    <property type="match status" value="1"/>
</dbReference>
<dbReference type="InterPro" id="IPR001209">
    <property type="entry name" value="Ribosomal_uS14"/>
</dbReference>
<dbReference type="InterPro" id="IPR023053">
    <property type="entry name" value="Ribosomal_uS14_bact"/>
</dbReference>
<dbReference type="InterPro" id="IPR018271">
    <property type="entry name" value="Ribosomal_uS14_CS"/>
</dbReference>
<dbReference type="InterPro" id="IPR043140">
    <property type="entry name" value="Ribosomal_uS14_sf"/>
</dbReference>
<dbReference type="NCBIfam" id="NF005974">
    <property type="entry name" value="PRK08061.1"/>
    <property type="match status" value="1"/>
</dbReference>
<dbReference type="PANTHER" id="PTHR19836">
    <property type="entry name" value="30S RIBOSOMAL PROTEIN S14"/>
    <property type="match status" value="1"/>
</dbReference>
<dbReference type="PANTHER" id="PTHR19836:SF19">
    <property type="entry name" value="SMALL RIBOSOMAL SUBUNIT PROTEIN US14M"/>
    <property type="match status" value="1"/>
</dbReference>
<dbReference type="Pfam" id="PF00253">
    <property type="entry name" value="Ribosomal_S14"/>
    <property type="match status" value="1"/>
</dbReference>
<dbReference type="SUPFAM" id="SSF57716">
    <property type="entry name" value="Glucocorticoid receptor-like (DNA-binding domain)"/>
    <property type="match status" value="1"/>
</dbReference>
<dbReference type="PROSITE" id="PS00527">
    <property type="entry name" value="RIBOSOMAL_S14"/>
    <property type="match status" value="1"/>
</dbReference>
<name>RS14Z_DEHMC</name>
<reference key="1">
    <citation type="journal article" date="2005" name="Nat. Biotechnol.">
        <title>Genome sequence of the chlorinated compound-respiring bacterium Dehalococcoides species strain CBDB1.</title>
        <authorList>
            <person name="Kube M."/>
            <person name="Beck A."/>
            <person name="Zinder S.H."/>
            <person name="Kuhl H."/>
            <person name="Reinhardt R."/>
            <person name="Adrian L."/>
        </authorList>
    </citation>
    <scope>NUCLEOTIDE SEQUENCE [LARGE SCALE GENOMIC DNA]</scope>
    <source>
        <strain>CBDB1</strain>
    </source>
</reference>
<gene>
    <name evidence="1" type="primary">rpsZ</name>
    <name evidence="1" type="synonym">rpsN</name>
    <name type="ordered locus">cbdbA451.1</name>
    <name type="ORF">cbdbB14</name>
</gene>
<evidence type="ECO:0000255" key="1">
    <source>
        <dbReference type="HAMAP-Rule" id="MF_01364"/>
    </source>
</evidence>
<evidence type="ECO:0000305" key="2"/>
<accession>Q3ZZL1</accession>
<comment type="function">
    <text evidence="1">Binds 16S rRNA, required for the assembly of 30S particles and may also be responsible for determining the conformation of the 16S rRNA at the A site.</text>
</comment>
<comment type="cofactor">
    <cofactor evidence="1">
        <name>Zn(2+)</name>
        <dbReference type="ChEBI" id="CHEBI:29105"/>
    </cofactor>
    <text evidence="1">Binds 1 zinc ion per subunit.</text>
</comment>
<comment type="subunit">
    <text evidence="1">Part of the 30S ribosomal subunit. Contacts proteins S3 and S10.</text>
</comment>
<comment type="similarity">
    <text evidence="1">Belongs to the universal ribosomal protein uS14 family. Zinc-binding uS14 subfamily.</text>
</comment>
<keyword id="KW-0479">Metal-binding</keyword>
<keyword id="KW-0687">Ribonucleoprotein</keyword>
<keyword id="KW-0689">Ribosomal protein</keyword>
<keyword id="KW-0694">RNA-binding</keyword>
<keyword id="KW-0699">rRNA-binding</keyword>
<keyword id="KW-0862">Zinc</keyword>
<organism>
    <name type="scientific">Dehalococcoides mccartyi (strain CBDB1)</name>
    <dbReference type="NCBI Taxonomy" id="255470"/>
    <lineage>
        <taxon>Bacteria</taxon>
        <taxon>Bacillati</taxon>
        <taxon>Chloroflexota</taxon>
        <taxon>Dehalococcoidia</taxon>
        <taxon>Dehalococcoidales</taxon>
        <taxon>Dehalococcoidaceae</taxon>
        <taxon>Dehalococcoides</taxon>
    </lineage>
</organism>